<evidence type="ECO:0000255" key="1">
    <source>
        <dbReference type="HAMAP-Rule" id="MF_01077"/>
    </source>
</evidence>
<sequence>MRMPEHLQRLIEPVVTGLGYELAGIEFDARARVLRVYIDHPQGIGLDDCSKVSYQLSGMLDVEDPIPGQYQLEISSPGLDRPLFTLEHFKRFTGRRVRLQTLRSLDGQRRFKGEIAGVRGDVIDLEDDNGLHAIPFDLIDKARLIPEFDI</sequence>
<dbReference type="EMBL" id="AE017282">
    <property type="protein sequence ID" value="AAU92654.1"/>
    <property type="molecule type" value="Genomic_DNA"/>
</dbReference>
<dbReference type="RefSeq" id="WP_010960598.1">
    <property type="nucleotide sequence ID" value="NC_002977.6"/>
</dbReference>
<dbReference type="SMR" id="Q609B8"/>
<dbReference type="STRING" id="243233.MCA1317"/>
<dbReference type="GeneID" id="88223600"/>
<dbReference type="KEGG" id="mca:MCA1317"/>
<dbReference type="eggNOG" id="COG0779">
    <property type="taxonomic scope" value="Bacteria"/>
</dbReference>
<dbReference type="HOGENOM" id="CLU_070525_1_1_6"/>
<dbReference type="Proteomes" id="UP000006821">
    <property type="component" value="Chromosome"/>
</dbReference>
<dbReference type="GO" id="GO:0005829">
    <property type="term" value="C:cytosol"/>
    <property type="evidence" value="ECO:0007669"/>
    <property type="project" value="TreeGrafter"/>
</dbReference>
<dbReference type="GO" id="GO:0000028">
    <property type="term" value="P:ribosomal small subunit assembly"/>
    <property type="evidence" value="ECO:0007669"/>
    <property type="project" value="TreeGrafter"/>
</dbReference>
<dbReference type="GO" id="GO:0006412">
    <property type="term" value="P:translation"/>
    <property type="evidence" value="ECO:0007669"/>
    <property type="project" value="TreeGrafter"/>
</dbReference>
<dbReference type="CDD" id="cd01734">
    <property type="entry name" value="YlxS_C"/>
    <property type="match status" value="1"/>
</dbReference>
<dbReference type="FunFam" id="3.30.300.70:FF:000001">
    <property type="entry name" value="Ribosome maturation factor RimP"/>
    <property type="match status" value="1"/>
</dbReference>
<dbReference type="Gene3D" id="2.30.30.180">
    <property type="entry name" value="Ribosome maturation factor RimP, C-terminal domain"/>
    <property type="match status" value="1"/>
</dbReference>
<dbReference type="Gene3D" id="3.30.300.70">
    <property type="entry name" value="RimP-like superfamily, N-terminal"/>
    <property type="match status" value="1"/>
</dbReference>
<dbReference type="HAMAP" id="MF_01077">
    <property type="entry name" value="RimP"/>
    <property type="match status" value="1"/>
</dbReference>
<dbReference type="InterPro" id="IPR003728">
    <property type="entry name" value="Ribosome_maturation_RimP"/>
</dbReference>
<dbReference type="InterPro" id="IPR028998">
    <property type="entry name" value="RimP_C"/>
</dbReference>
<dbReference type="InterPro" id="IPR036847">
    <property type="entry name" value="RimP_C_sf"/>
</dbReference>
<dbReference type="InterPro" id="IPR028989">
    <property type="entry name" value="RimP_N"/>
</dbReference>
<dbReference type="InterPro" id="IPR035956">
    <property type="entry name" value="RimP_N_sf"/>
</dbReference>
<dbReference type="NCBIfam" id="NF000927">
    <property type="entry name" value="PRK00092.1-1"/>
    <property type="match status" value="1"/>
</dbReference>
<dbReference type="PANTHER" id="PTHR33867">
    <property type="entry name" value="RIBOSOME MATURATION FACTOR RIMP"/>
    <property type="match status" value="1"/>
</dbReference>
<dbReference type="PANTHER" id="PTHR33867:SF1">
    <property type="entry name" value="RIBOSOME MATURATION FACTOR RIMP"/>
    <property type="match status" value="1"/>
</dbReference>
<dbReference type="Pfam" id="PF17384">
    <property type="entry name" value="DUF150_C"/>
    <property type="match status" value="1"/>
</dbReference>
<dbReference type="Pfam" id="PF02576">
    <property type="entry name" value="RimP_N"/>
    <property type="match status" value="1"/>
</dbReference>
<dbReference type="SUPFAM" id="SSF74942">
    <property type="entry name" value="YhbC-like, C-terminal domain"/>
    <property type="match status" value="1"/>
</dbReference>
<dbReference type="SUPFAM" id="SSF75420">
    <property type="entry name" value="YhbC-like, N-terminal domain"/>
    <property type="match status" value="1"/>
</dbReference>
<feature type="chain" id="PRO_0000229251" description="Ribosome maturation factor RimP">
    <location>
        <begin position="1"/>
        <end position="150"/>
    </location>
</feature>
<proteinExistence type="inferred from homology"/>
<accession>Q609B8</accession>
<reference key="1">
    <citation type="journal article" date="2004" name="PLoS Biol.">
        <title>Genomic insights into methanotrophy: the complete genome sequence of Methylococcus capsulatus (Bath).</title>
        <authorList>
            <person name="Ward N.L."/>
            <person name="Larsen O."/>
            <person name="Sakwa J."/>
            <person name="Bruseth L."/>
            <person name="Khouri H.M."/>
            <person name="Durkin A.S."/>
            <person name="Dimitrov G."/>
            <person name="Jiang L."/>
            <person name="Scanlan D."/>
            <person name="Kang K.H."/>
            <person name="Lewis M.R."/>
            <person name="Nelson K.E."/>
            <person name="Methe B.A."/>
            <person name="Wu M."/>
            <person name="Heidelberg J.F."/>
            <person name="Paulsen I.T."/>
            <person name="Fouts D.E."/>
            <person name="Ravel J."/>
            <person name="Tettelin H."/>
            <person name="Ren Q."/>
            <person name="Read T.D."/>
            <person name="DeBoy R.T."/>
            <person name="Seshadri R."/>
            <person name="Salzberg S.L."/>
            <person name="Jensen H.B."/>
            <person name="Birkeland N.K."/>
            <person name="Nelson W.C."/>
            <person name="Dodson R.J."/>
            <person name="Grindhaug S.H."/>
            <person name="Holt I.E."/>
            <person name="Eidhammer I."/>
            <person name="Jonasen I."/>
            <person name="Vanaken S."/>
            <person name="Utterback T.R."/>
            <person name="Feldblyum T.V."/>
            <person name="Fraser C.M."/>
            <person name="Lillehaug J.R."/>
            <person name="Eisen J.A."/>
        </authorList>
    </citation>
    <scope>NUCLEOTIDE SEQUENCE [LARGE SCALE GENOMIC DNA]</scope>
    <source>
        <strain>ATCC 33009 / NCIMB 11132 / Bath</strain>
    </source>
</reference>
<organism>
    <name type="scientific">Methylococcus capsulatus (strain ATCC 33009 / NCIMB 11132 / Bath)</name>
    <dbReference type="NCBI Taxonomy" id="243233"/>
    <lineage>
        <taxon>Bacteria</taxon>
        <taxon>Pseudomonadati</taxon>
        <taxon>Pseudomonadota</taxon>
        <taxon>Gammaproteobacteria</taxon>
        <taxon>Methylococcales</taxon>
        <taxon>Methylococcaceae</taxon>
        <taxon>Methylococcus</taxon>
    </lineage>
</organism>
<protein>
    <recommendedName>
        <fullName evidence="1">Ribosome maturation factor RimP</fullName>
    </recommendedName>
</protein>
<gene>
    <name evidence="1" type="primary">rimP</name>
    <name type="ordered locus">MCA1317</name>
</gene>
<name>RIMP_METCA</name>
<comment type="function">
    <text evidence="1">Required for maturation of 30S ribosomal subunits.</text>
</comment>
<comment type="subcellular location">
    <subcellularLocation>
        <location evidence="1">Cytoplasm</location>
    </subcellularLocation>
</comment>
<comment type="similarity">
    <text evidence="1">Belongs to the RimP family.</text>
</comment>
<keyword id="KW-0963">Cytoplasm</keyword>
<keyword id="KW-1185">Reference proteome</keyword>
<keyword id="KW-0690">Ribosome biogenesis</keyword>